<feature type="chain" id="PRO_0000089040" description="Actin-66">
    <location>
        <begin position="1" status="less than"/>
        <end position="336" status="greater than"/>
    </location>
</feature>
<feature type="non-terminal residue">
    <location>
        <position position="1"/>
    </location>
</feature>
<feature type="non-terminal residue">
    <location>
        <position position="336"/>
    </location>
</feature>
<reference key="1">
    <citation type="journal article" date="1996" name="Mol. Biol. Evol.">
        <title>Phylogeny and substitution rates of angiosperm actin genes.</title>
        <authorList>
            <person name="Moniz de Sa M."/>
            <person name="Drouin G."/>
        </authorList>
    </citation>
    <scope>NUCLEOTIDE SEQUENCE [GENOMIC DNA]</scope>
</reference>
<keyword id="KW-0067">ATP-binding</keyword>
<keyword id="KW-0963">Cytoplasm</keyword>
<keyword id="KW-0206">Cytoskeleton</keyword>
<keyword id="KW-0378">Hydrolase</keyword>
<keyword id="KW-0547">Nucleotide-binding</keyword>
<keyword id="KW-1185">Reference proteome</keyword>
<sequence>AGFAGDDAPRAVFPSIVGRPRHTGVMVGMGQKDAYIGDEAQSKRGILTLKYPIEHGIVSNWDDMEKIWHHTFYNELRVAPEEHPWLLTEAPLNPKANREKMTQIMFETFNVPAMYVAIQAVLSLYASGRTTGIVLDSGDGVSHTVPIYEGYALPHAILRLDLAGRDLTDCLMKILTERGYSFTTSAEREIVRDVKEKLAYVALDYEQELETAKSSSSVEKSYELPDGQVITIGSERFRCPEVLFQPSLVGMEAAGIHETTYNSIMKCDVDIRKDLYGNIVLSGGTTMFPGIADRMSKEITALAPSSMKIKVVAPPERKYSVWIGGSILASLSTFQQ</sequence>
<proteinExistence type="inferred from homology"/>
<evidence type="ECO:0000250" key="1">
    <source>
        <dbReference type="UniProtKB" id="P68137"/>
    </source>
</evidence>
<evidence type="ECO:0000305" key="2"/>
<comment type="function">
    <text>Actins are highly conserved proteins that are involved in various types of cell motility and are ubiquitously expressed in all eukaryotic cells. Essential component of cell cytoskeleton; plays an important role in cytoplasmic streaming, cell shape determination, cell division, organelle movement and extension growth.</text>
</comment>
<comment type="catalytic activity">
    <reaction evidence="1">
        <text>ATP + H2O = ADP + phosphate + H(+)</text>
        <dbReference type="Rhea" id="RHEA:13065"/>
        <dbReference type="ChEBI" id="CHEBI:15377"/>
        <dbReference type="ChEBI" id="CHEBI:15378"/>
        <dbReference type="ChEBI" id="CHEBI:30616"/>
        <dbReference type="ChEBI" id="CHEBI:43474"/>
        <dbReference type="ChEBI" id="CHEBI:456216"/>
    </reaction>
</comment>
<comment type="subcellular location">
    <subcellularLocation>
        <location>Cytoplasm</location>
        <location>Cytoskeleton</location>
    </subcellularLocation>
</comment>
<comment type="miscellaneous">
    <text>There are at least 7 different actin genes in tobacco.</text>
</comment>
<comment type="similarity">
    <text evidence="2">Belongs to the actin family.</text>
</comment>
<protein>
    <recommendedName>
        <fullName>Actin-66</fullName>
        <ecNumber evidence="1">3.6.4.-</ecNumber>
    </recommendedName>
</protein>
<dbReference type="EC" id="3.6.4.-" evidence="1"/>
<dbReference type="EMBL" id="U60491">
    <property type="protein sequence ID" value="AAB40087.1"/>
    <property type="molecule type" value="Genomic_DNA"/>
</dbReference>
<dbReference type="SMR" id="P93372"/>
<dbReference type="STRING" id="4097.P93372"/>
<dbReference type="PaxDb" id="4097-P93372"/>
<dbReference type="Proteomes" id="UP000084051">
    <property type="component" value="Unplaced"/>
</dbReference>
<dbReference type="GO" id="GO:0015629">
    <property type="term" value="C:actin cytoskeleton"/>
    <property type="evidence" value="ECO:0000318"/>
    <property type="project" value="GO_Central"/>
</dbReference>
<dbReference type="GO" id="GO:0005737">
    <property type="term" value="C:cytoplasm"/>
    <property type="evidence" value="ECO:0007669"/>
    <property type="project" value="UniProtKB-KW"/>
</dbReference>
<dbReference type="GO" id="GO:0005524">
    <property type="term" value="F:ATP binding"/>
    <property type="evidence" value="ECO:0007669"/>
    <property type="project" value="UniProtKB-KW"/>
</dbReference>
<dbReference type="GO" id="GO:0016787">
    <property type="term" value="F:hydrolase activity"/>
    <property type="evidence" value="ECO:0007669"/>
    <property type="project" value="UniProtKB-KW"/>
</dbReference>
<dbReference type="CDD" id="cd10224">
    <property type="entry name" value="ASKHA_NBD_actin"/>
    <property type="match status" value="1"/>
</dbReference>
<dbReference type="FunFam" id="2.30.36.70:FF:000001">
    <property type="entry name" value="Actin, alpha skeletal muscle"/>
    <property type="match status" value="1"/>
</dbReference>
<dbReference type="FunFam" id="3.30.420.40:FF:000291">
    <property type="entry name" value="Actin, alpha skeletal muscle"/>
    <property type="match status" value="1"/>
</dbReference>
<dbReference type="FunFam" id="3.90.640.10:FF:000001">
    <property type="entry name" value="Actin, muscle"/>
    <property type="match status" value="1"/>
</dbReference>
<dbReference type="FunFam" id="3.30.420.40:FF:000404">
    <property type="entry name" value="Major actin"/>
    <property type="match status" value="1"/>
</dbReference>
<dbReference type="Gene3D" id="3.30.420.40">
    <property type="match status" value="2"/>
</dbReference>
<dbReference type="Gene3D" id="3.90.640.10">
    <property type="entry name" value="Actin, Chain A, domain 4"/>
    <property type="match status" value="1"/>
</dbReference>
<dbReference type="InterPro" id="IPR004000">
    <property type="entry name" value="Actin"/>
</dbReference>
<dbReference type="InterPro" id="IPR020902">
    <property type="entry name" value="Actin/actin-like_CS"/>
</dbReference>
<dbReference type="InterPro" id="IPR004001">
    <property type="entry name" value="Actin_CS"/>
</dbReference>
<dbReference type="InterPro" id="IPR043129">
    <property type="entry name" value="ATPase_NBD"/>
</dbReference>
<dbReference type="PANTHER" id="PTHR11937">
    <property type="entry name" value="ACTIN"/>
    <property type="match status" value="1"/>
</dbReference>
<dbReference type="Pfam" id="PF00022">
    <property type="entry name" value="Actin"/>
    <property type="match status" value="1"/>
</dbReference>
<dbReference type="PRINTS" id="PR00190">
    <property type="entry name" value="ACTIN"/>
</dbReference>
<dbReference type="SMART" id="SM00268">
    <property type="entry name" value="ACTIN"/>
    <property type="match status" value="1"/>
</dbReference>
<dbReference type="SUPFAM" id="SSF53067">
    <property type="entry name" value="Actin-like ATPase domain"/>
    <property type="match status" value="2"/>
</dbReference>
<dbReference type="PROSITE" id="PS00406">
    <property type="entry name" value="ACTINS_1"/>
    <property type="match status" value="1"/>
</dbReference>
<dbReference type="PROSITE" id="PS01132">
    <property type="entry name" value="ACTINS_ACT_LIKE"/>
    <property type="match status" value="1"/>
</dbReference>
<accession>P93372</accession>
<organism>
    <name type="scientific">Nicotiana tabacum</name>
    <name type="common">Common tobacco</name>
    <dbReference type="NCBI Taxonomy" id="4097"/>
    <lineage>
        <taxon>Eukaryota</taxon>
        <taxon>Viridiplantae</taxon>
        <taxon>Streptophyta</taxon>
        <taxon>Embryophyta</taxon>
        <taxon>Tracheophyta</taxon>
        <taxon>Spermatophyta</taxon>
        <taxon>Magnoliopsida</taxon>
        <taxon>eudicotyledons</taxon>
        <taxon>Gunneridae</taxon>
        <taxon>Pentapetalae</taxon>
        <taxon>asterids</taxon>
        <taxon>lamiids</taxon>
        <taxon>Solanales</taxon>
        <taxon>Solanaceae</taxon>
        <taxon>Nicotianoideae</taxon>
        <taxon>Nicotianeae</taxon>
        <taxon>Nicotiana</taxon>
    </lineage>
</organism>
<name>ACT4_TOBAC</name>